<sequence length="218" mass="24161">MDKSESTSAGRNRRRRPRRGSRSASSSADANFRVLSQQLSRLNKTLAAGRPTINHPTFVGSERCRPGYTFTSITLKPPKIDRGSYYGKRLLLPDSVTEYDKKLVSRIQIRVNPLPKFDSTVWVTVRKVLASSDLSVAAISAMFADGASPVLVYQYAASGVQANNKLLYDLSAMRADIGDMRKYAILVYSKDDALETDELVLHVDIEHQRIPTSGVLPV</sequence>
<organism>
    <name type="scientific">Cucumber mosaic virus (strain P6)</name>
    <name type="common">CMV</name>
    <dbReference type="NCBI Taxonomy" id="31719"/>
    <lineage>
        <taxon>Viruses</taxon>
        <taxon>Riboviria</taxon>
        <taxon>Orthornavirae</taxon>
        <taxon>Kitrinoviricota</taxon>
        <taxon>Alsuviricetes</taxon>
        <taxon>Martellivirales</taxon>
        <taxon>Bromoviridae</taxon>
        <taxon>Cucumovirus</taxon>
        <taxon>Cucumber mosaic virus</taxon>
    </lineage>
</organism>
<proteinExistence type="evidence at protein level"/>
<dbReference type="EMBL" id="D10545">
    <property type="protein sequence ID" value="BAA01404.1"/>
    <property type="molecule type" value="Genomic_RNA"/>
</dbReference>
<dbReference type="PIR" id="JQ1254">
    <property type="entry name" value="JQ1254"/>
</dbReference>
<dbReference type="SMR" id="Q00261"/>
<dbReference type="iPTMnet" id="Q00261"/>
<dbReference type="GO" id="GO:1990904">
    <property type="term" value="C:ribonucleoprotein complex"/>
    <property type="evidence" value="ECO:0007669"/>
    <property type="project" value="UniProtKB-KW"/>
</dbReference>
<dbReference type="GO" id="GO:0039617">
    <property type="term" value="C:T=3 icosahedral viral capsid"/>
    <property type="evidence" value="ECO:0007669"/>
    <property type="project" value="UniProtKB-KW"/>
</dbReference>
<dbReference type="GO" id="GO:0019013">
    <property type="term" value="C:viral nucleocapsid"/>
    <property type="evidence" value="ECO:0007669"/>
    <property type="project" value="UniProtKB-KW"/>
</dbReference>
<dbReference type="GO" id="GO:0003723">
    <property type="term" value="F:RNA binding"/>
    <property type="evidence" value="ECO:0007669"/>
    <property type="project" value="UniProtKB-KW"/>
</dbReference>
<dbReference type="GO" id="GO:0005198">
    <property type="term" value="F:structural molecule activity"/>
    <property type="evidence" value="ECO:0007669"/>
    <property type="project" value="InterPro"/>
</dbReference>
<dbReference type="Gene3D" id="2.60.120.530">
    <property type="entry name" value="Cucumovirus coat protein, subunit A"/>
    <property type="match status" value="1"/>
</dbReference>
<dbReference type="InterPro" id="IPR000247">
    <property type="entry name" value="Cucumovirus_coat"/>
</dbReference>
<dbReference type="InterPro" id="IPR037137">
    <property type="entry name" value="Cucumovirus_coat_Asu_sf"/>
</dbReference>
<dbReference type="Pfam" id="PF00760">
    <property type="entry name" value="Cucumo_coat"/>
    <property type="match status" value="1"/>
</dbReference>
<dbReference type="PRINTS" id="PR00222">
    <property type="entry name" value="CUCUMOCOAT"/>
</dbReference>
<dbReference type="SUPFAM" id="SSF88633">
    <property type="entry name" value="Positive stranded ssRNA viruses"/>
    <property type="match status" value="1"/>
</dbReference>
<feature type="chain" id="PRO_0000083216" description="Capsid protein">
    <location>
        <begin position="1"/>
        <end position="218"/>
    </location>
</feature>
<feature type="region of interest" description="Disordered" evidence="2">
    <location>
        <begin position="1"/>
        <end position="30"/>
    </location>
</feature>
<feature type="compositionally biased region" description="Low complexity" evidence="2">
    <location>
        <begin position="1"/>
        <end position="10"/>
    </location>
</feature>
<feature type="compositionally biased region" description="Basic residues" evidence="2">
    <location>
        <begin position="11"/>
        <end position="21"/>
    </location>
</feature>
<feature type="modified residue" description="N-acetylmethionine; by host" evidence="3">
    <location>
        <position position="1"/>
    </location>
</feature>
<reference key="1">
    <citation type="journal article" date="1991" name="J. Gen. Virol.">
        <title>Coat protein gene sequences of two cucumber mosaic virus strains reveal a single amino acid change correlating with chlorosis induction.</title>
        <authorList>
            <person name="Shintaku M."/>
        </authorList>
    </citation>
    <scope>NUCLEOTIDE SEQUENCE [GENOMIC RNA]</scope>
</reference>
<reference key="2">
    <citation type="journal article" date="1982" name="J. Biochem.">
        <title>Micro-identification of amino-terminal acetylamino acids in proteins.</title>
        <authorList>
            <person name="Tsunasawa S."/>
            <person name="Narita K."/>
        </authorList>
    </citation>
    <scope>ACETYLATION AT MET-1</scope>
</reference>
<accession>Q00261</accession>
<comment type="function">
    <text evidence="1">Capsid protein. Probably binds RNA and plays a role in packaging (By similarity).</text>
</comment>
<comment type="subcellular location">
    <subcellularLocation>
        <location evidence="4">Virion</location>
    </subcellularLocation>
</comment>
<comment type="domain">
    <text evidence="1">The N-terminal arginine-rich stretch does not seem to be the major RNA-binding region that allows formation of an infectious ribonucleoprotein complex.</text>
</comment>
<comment type="similarity">
    <text evidence="4">Belongs to the cucumovirus capsid protein family.</text>
</comment>
<protein>
    <recommendedName>
        <fullName>Capsid protein</fullName>
        <shortName>CP</shortName>
    </recommendedName>
    <alternativeName>
        <fullName>Coat protein</fullName>
    </alternativeName>
</protein>
<gene>
    <name type="ORF">ORF3b</name>
</gene>
<keyword id="KW-0007">Acetylation</keyword>
<keyword id="KW-0167">Capsid protein</keyword>
<keyword id="KW-0687">Ribonucleoprotein</keyword>
<keyword id="KW-0694">RNA-binding</keyword>
<keyword id="KW-1142">T=3 icosahedral capsid protein</keyword>
<keyword id="KW-0543">Viral nucleoprotein</keyword>
<keyword id="KW-0946">Virion</keyword>
<name>CAPSD_CMVP6</name>
<organismHost>
    <name type="scientific">Cucumis sativus</name>
    <name type="common">Cucumber</name>
    <dbReference type="NCBI Taxonomy" id="3659"/>
</organismHost>
<organismHost>
    <name type="scientific">Solanum lycopersicum</name>
    <name type="common">Tomato</name>
    <name type="synonym">Lycopersicon esculentum</name>
    <dbReference type="NCBI Taxonomy" id="4081"/>
</organismHost>
<organismHost>
    <name type="scientific">Spinacia oleracea</name>
    <name type="common">Spinach</name>
    <dbReference type="NCBI Taxonomy" id="3562"/>
</organismHost>
<evidence type="ECO:0000250" key="1"/>
<evidence type="ECO:0000256" key="2">
    <source>
        <dbReference type="SAM" id="MobiDB-lite"/>
    </source>
</evidence>
<evidence type="ECO:0000269" key="3">
    <source>
    </source>
</evidence>
<evidence type="ECO:0000305" key="4"/>